<sequence>MEPYSALLAVTILCLTSTMGVSGDCSTNISPKKGLDKAKYFSGTWYVTHYLDKDPQVTDPYCSSFTPKESGGTVKEALYHFNSKKKTSFYNIGEGKLGSSGVQYTAKYNTVDKKRKEIEPADPKDSYTLTVLEADDSSALVHICLREGPKDLGDLYTVLSHQKTGEPSATVKNAVAQAGLKLNDFVDTKTLSCTYDDQFTSM</sequence>
<protein>
    <recommendedName>
        <fullName>Nitrophorin-3</fullName>
        <shortName>NP3</shortName>
    </recommendedName>
</protein>
<organism>
    <name type="scientific">Rhodnius prolixus</name>
    <name type="common">Triatomid bug</name>
    <dbReference type="NCBI Taxonomy" id="13249"/>
    <lineage>
        <taxon>Eukaryota</taxon>
        <taxon>Metazoa</taxon>
        <taxon>Ecdysozoa</taxon>
        <taxon>Arthropoda</taxon>
        <taxon>Hexapoda</taxon>
        <taxon>Insecta</taxon>
        <taxon>Pterygota</taxon>
        <taxon>Neoptera</taxon>
        <taxon>Paraneoptera</taxon>
        <taxon>Hemiptera</taxon>
        <taxon>Heteroptera</taxon>
        <taxon>Panheteroptera</taxon>
        <taxon>Cimicomorpha</taxon>
        <taxon>Reduviidae</taxon>
        <taxon>Triatominae</taxon>
        <taxon>Rhodnius</taxon>
    </lineage>
</organism>
<name>NP3_RHOPR</name>
<feature type="signal peptide" evidence="5">
    <location>
        <begin position="1"/>
        <end position="23"/>
    </location>
</feature>
<feature type="chain" id="PRO_0000021825" description="Nitrophorin-3">
    <location>
        <begin position="24"/>
        <end position="202"/>
    </location>
</feature>
<feature type="binding site" description="proximal binding residue" evidence="2">
    <location>
        <position position="80"/>
    </location>
    <ligand>
        <name>heme</name>
        <dbReference type="ChEBI" id="CHEBI:30413"/>
    </ligand>
    <ligandPart>
        <name>Fe</name>
        <dbReference type="ChEBI" id="CHEBI:18248"/>
    </ligandPart>
</feature>
<feature type="disulfide bond" evidence="2">
    <location>
        <begin position="25"/>
        <end position="144"/>
    </location>
</feature>
<feature type="disulfide bond" evidence="2">
    <location>
        <begin position="62"/>
        <end position="193"/>
    </location>
</feature>
<comment type="function">
    <text evidence="1 3 4 5">Heme-based protein that deliver nitric oxide gas (NO) to the victim while feeding, resulting in vasodilation and inhibition of platelet aggregation. Reversibly binds nitric oxide (NO) (PubMed:7721773). Also binds tightly to histamine, which is released by the host to induce wound healing (By similarity). Exhibits weak anticoagulant activity (PubMed:10884386, PubMed:15866866).</text>
</comment>
<comment type="subunit">
    <text evidence="4">Interacts weakly with host coagulation factor IX (F9) (inactive and activated) in the presence of Ca(2+).</text>
</comment>
<comment type="subcellular location">
    <subcellularLocation>
        <location>Secreted</location>
    </subcellularLocation>
</comment>
<comment type="tissue specificity">
    <text evidence="5">Salivary gland (at protein level).</text>
</comment>
<comment type="similarity">
    <text evidence="7">Belongs to the calycin superfamily. Nitrophorin family.</text>
</comment>
<proteinExistence type="evidence at protein level"/>
<evidence type="ECO:0000250" key="1"/>
<evidence type="ECO:0000250" key="2">
    <source>
        <dbReference type="UniProtKB" id="Q26241"/>
    </source>
</evidence>
<evidence type="ECO:0000269" key="3">
    <source>
    </source>
</evidence>
<evidence type="ECO:0000269" key="4">
    <source>
    </source>
</evidence>
<evidence type="ECO:0000269" key="5">
    <source>
    </source>
</evidence>
<evidence type="ECO:0000303" key="6">
    <source>
    </source>
</evidence>
<evidence type="ECO:0000305" key="7"/>
<reference key="1">
    <citation type="submission" date="1996-09" db="EMBL/GenBank/DDBJ databases">
        <authorList>
            <person name="Champagne D.E."/>
            <person name="Ribeiro J.M.C."/>
        </authorList>
    </citation>
    <scope>NUCLEOTIDE SEQUENCE [MRNA]</scope>
    <source>
        <tissue>Salivary gland</tissue>
    </source>
</reference>
<reference key="2">
    <citation type="journal article" date="1995" name="J. Biol. Chem.">
        <title>Purification, partial characterization, and cloning of nitric oxide-carrying heme proteins (nitrophorins) from salivary glands of the blood-sucking insect Rhodnius prolixus.</title>
        <authorList>
            <person name="Champagne D.E."/>
            <person name="Nussenzveig R.H."/>
            <person name="Ribeiro J.M.C."/>
        </authorList>
    </citation>
    <scope>PROTEIN SEQUENCE OF 24-43</scope>
    <scope>FUNCTION</scope>
    <scope>TISSUE SPECIFICITY</scope>
    <source>
        <tissue evidence="6">Salivary gland</tissue>
    </source>
</reference>
<reference key="3">
    <citation type="journal article" date="2000" name="J. Biol. Chem.">
        <title>The crystal structure of nitrophorin 2: a trifunctional antihemostatic protein from the saliva of Rhodnius prolixus.</title>
        <authorList>
            <person name="Andersen J.F."/>
            <person name="Montfort W.R."/>
        </authorList>
    </citation>
    <scope>FUNCTION</scope>
</reference>
<reference key="4">
    <citation type="journal article" date="2005" name="J. Biol. Chem.">
        <title>Structural determinants of factor IX(a) binding in nitrophorin 2, a lipocalin inhibitor of the intrinsic coagulation pathway.</title>
        <authorList>
            <person name="Gudderra N.P."/>
            <person name="Ribeiro J.M."/>
            <person name="Andersen J.F."/>
        </authorList>
    </citation>
    <scope>FUNCTION</scope>
    <scope>INTERACTION WITH HOST COAGULATION FACTOR IX (F9)</scope>
</reference>
<dbReference type="EMBL" id="U70583">
    <property type="protein sequence ID" value="AAB09589.1"/>
    <property type="molecule type" value="mRNA"/>
</dbReference>
<dbReference type="SMR" id="Q94733"/>
<dbReference type="STRING" id="13249.Q94733"/>
<dbReference type="VEuPathDB" id="VectorBase:RPRC000072"/>
<dbReference type="InParanoid" id="Q94733"/>
<dbReference type="Proteomes" id="UP000015103">
    <property type="component" value="Unassembled WGS sequence"/>
</dbReference>
<dbReference type="GO" id="GO:0005576">
    <property type="term" value="C:extracellular region"/>
    <property type="evidence" value="ECO:0007669"/>
    <property type="project" value="UniProtKB-SubCell"/>
</dbReference>
<dbReference type="GO" id="GO:0051381">
    <property type="term" value="F:histamine binding"/>
    <property type="evidence" value="ECO:0007669"/>
    <property type="project" value="InterPro"/>
</dbReference>
<dbReference type="GO" id="GO:0046872">
    <property type="term" value="F:metal ion binding"/>
    <property type="evidence" value="ECO:0007669"/>
    <property type="project" value="UniProtKB-KW"/>
</dbReference>
<dbReference type="GO" id="GO:0070026">
    <property type="term" value="F:nitric oxide binding"/>
    <property type="evidence" value="ECO:0007669"/>
    <property type="project" value="InterPro"/>
</dbReference>
<dbReference type="GO" id="GO:0090729">
    <property type="term" value="F:toxin activity"/>
    <property type="evidence" value="ECO:0007669"/>
    <property type="project" value="UniProtKB-KW"/>
</dbReference>
<dbReference type="GO" id="GO:0042311">
    <property type="term" value="P:vasodilation"/>
    <property type="evidence" value="ECO:0007669"/>
    <property type="project" value="UniProtKB-KW"/>
</dbReference>
<dbReference type="CDD" id="cd19454">
    <property type="entry name" value="lipocalin_NP3"/>
    <property type="match status" value="1"/>
</dbReference>
<dbReference type="Gene3D" id="2.40.128.20">
    <property type="match status" value="1"/>
</dbReference>
<dbReference type="InterPro" id="IPR012674">
    <property type="entry name" value="Calycin"/>
</dbReference>
<dbReference type="InterPro" id="IPR023613">
    <property type="entry name" value="Nitrophorin"/>
</dbReference>
<dbReference type="InterPro" id="IPR002351">
    <property type="entry name" value="Nitrophorin_domain"/>
</dbReference>
<dbReference type="Pfam" id="PF02087">
    <property type="entry name" value="Nitrophorin"/>
    <property type="match status" value="1"/>
</dbReference>
<dbReference type="PRINTS" id="PR00788">
    <property type="entry name" value="NITROPHORIN"/>
</dbReference>
<dbReference type="SUPFAM" id="SSF50814">
    <property type="entry name" value="Lipocalins"/>
    <property type="match status" value="1"/>
</dbReference>
<keyword id="KW-0903">Direct protein sequencing</keyword>
<keyword id="KW-1015">Disulfide bond</keyword>
<keyword id="KW-0349">Heme</keyword>
<keyword id="KW-1199">Hemostasis impairing toxin</keyword>
<keyword id="KW-0408">Iron</keyword>
<keyword id="KW-0479">Metal-binding</keyword>
<keyword id="KW-1201">Platelet aggregation inhibiting toxin</keyword>
<keyword id="KW-1185">Reference proteome</keyword>
<keyword id="KW-0964">Secreted</keyword>
<keyword id="KW-0732">Signal</keyword>
<keyword id="KW-0800">Toxin</keyword>
<keyword id="KW-0838">Vasoactive</keyword>
<keyword id="KW-0840">Vasodilator</keyword>
<accession>Q94733</accession>